<keyword id="KW-0021">Allosteric enzyme</keyword>
<keyword id="KW-0058">Aromatic hydrocarbons catabolism</keyword>
<keyword id="KW-0520">NAD</keyword>
<keyword id="KW-0521">NADP</keyword>
<keyword id="KW-0560">Oxidoreductase</keyword>
<keyword id="KW-1185">Reference proteome</keyword>
<feature type="chain" id="PRO_0000387931" description="Acetaldehyde dehydrogenase 4">
    <location>
        <begin position="1"/>
        <end position="304"/>
    </location>
</feature>
<feature type="active site" description="Acyl-thioester intermediate" evidence="1 5">
    <location>
        <position position="131"/>
    </location>
</feature>
<feature type="binding site" evidence="1">
    <location>
        <begin position="162"/>
        <end position="170"/>
    </location>
    <ligand>
        <name>NAD(+)</name>
        <dbReference type="ChEBI" id="CHEBI:57540"/>
    </ligand>
</feature>
<feature type="binding site" evidence="1">
    <location>
        <position position="273"/>
    </location>
    <ligand>
        <name>NAD(+)</name>
        <dbReference type="ChEBI" id="CHEBI:57540"/>
    </ligand>
</feature>
<feature type="site" description="Responsible for governing aldehyde substrate chain length specificity">
    <location>
        <position position="195"/>
    </location>
</feature>
<feature type="mutagenesis site" description="Loss of catalytic activity. Still able to bind NAD(+), however with much lower affinity." evidence="5">
    <original>C</original>
    <variation>A</variation>
    <variation>S</variation>
    <location>
        <position position="131"/>
    </location>
</feature>
<feature type="mutagenesis site" description="Displays significant reduction in the level of allosteric activation of the aldol cleavage reaction by BphI." evidence="5">
    <original>N</original>
    <variation>A</variation>
    <variation>D</variation>
    <location>
        <position position="170"/>
    </location>
</feature>
<feature type="mutagenesis site" description="Exhibits preferences for aldehydes similar as wild-type. Exhibits about 80% of wild-type acetaldehyde channeling efficiency. Displays significant reduction in the level of allosteric activation of the aldol cleavage reaction by BphI." evidence="5">
    <original>I</original>
    <variation>A</variation>
    <variation>F</variation>
    <location>
        <position position="171"/>
    </location>
</feature>
<feature type="mutagenesis site" description="5-fold decrease in affinity for acetaldehyde. Increase in affinity for butyraldehyde and pentaldehyde, leading to a 9- and 20-fold increase in catalytic efficiency with butyraldehyde and pentaldehyde as substrate, respectively. Exhibits 84% of wild-type acetaldehyde channeling efficiency." evidence="4 5">
    <original>I</original>
    <variation>A</variation>
    <location>
        <position position="195"/>
    </location>
</feature>
<feature type="mutagenesis site" description="4- to 7-fold decrease in catalytic efficiency with aldehydes three to four carbons in length. Does not significantly reduce the channeling efficiency of the enzyme complex toward acetaldehyde or propanaldehyde." evidence="4 5">
    <original>I</original>
    <variation>F</variation>
    <location>
        <position position="195"/>
    </location>
</feature>
<feature type="mutagenesis site" description="Does not significantly reduce the channeling efficiency of the enzyme complex toward acetaldehyde or propanaldehyde." evidence="4 5">
    <original>I</original>
    <variation>L</variation>
    <location>
        <position position="195"/>
    </location>
</feature>
<feature type="mutagenesis site" description="5- to 16-fold decrease in catalytic efficiency with aldehydes two to four carbons in length. Exhibits 59% of wild-type acetaldehyde channeling efficiency." evidence="4 5">
    <original>I</original>
    <variation>W</variation>
    <location>
        <position position="195"/>
    </location>
</feature>
<feature type="mutagenesis site" description="2-fold decrease in catalytic efficiency." evidence="5">
    <original>D</original>
    <variation>A</variation>
    <location>
        <position position="208"/>
    </location>
</feature>
<sequence>MTKKIKCALIGPGNIGTDLLAKLQRSPVLEPIWMVGIDPESDGLKRAREMGIKTTADGVDGLIPHMQADGVQIVFDATSAYVHADNSRKVNALGALMIDLTPAAIGPFCVPTVNLKEHVGKGEMNVNMVTCGGQATIPMVAAVSRVQPVAYGEIVATVSSKSAGPGTRKNIDEFTRTTAGAVEKVGGAKKGKAIIILNPAEPPLIMRDTVHCLLESEPDQAKITESIHAMIKEVQKYVPGYKLVNGPVFDGLRVSVYLEVEGLGDYLPKYAGNLDIMTAAAARTAEMFAEEILAGQLTLQPVHA</sequence>
<reference key="1">
    <citation type="journal article" date="1994" name="Gene">
        <title>The biphenyl/polychlorinated biphenyl-degradation locus (bph) of Pseudomonas sp. LB400 encodes four additional metabolic enzymes.</title>
        <authorList>
            <person name="Hofer B."/>
            <person name="Backhaus S."/>
            <person name="Timmis K.N."/>
        </authorList>
    </citation>
    <scope>NUCLEOTIDE SEQUENCE [GENOMIC DNA]</scope>
</reference>
<reference key="2">
    <citation type="journal article" date="2006" name="Proc. Natl. Acad. Sci. U.S.A.">
        <title>Burkholderia xenovorans LB400 harbors a multi-replicon, 9.73-Mbp genome shaped for versatility.</title>
        <authorList>
            <person name="Chain P.S.G."/>
            <person name="Denef V.J."/>
            <person name="Konstantinidis K.T."/>
            <person name="Vergez L.M."/>
            <person name="Agullo L."/>
            <person name="Reyes V.L."/>
            <person name="Hauser L."/>
            <person name="Cordova M."/>
            <person name="Gomez L."/>
            <person name="Gonzalez M."/>
            <person name="Land M."/>
            <person name="Lao V."/>
            <person name="Larimer F."/>
            <person name="LiPuma J.J."/>
            <person name="Mahenthiralingam E."/>
            <person name="Malfatti S.A."/>
            <person name="Marx C.J."/>
            <person name="Parnell J.J."/>
            <person name="Ramette A."/>
            <person name="Richardson P."/>
            <person name="Seeger M."/>
            <person name="Smith D."/>
            <person name="Spilker T."/>
            <person name="Sul W.J."/>
            <person name="Tsoi T.V."/>
            <person name="Ulrich L.E."/>
            <person name="Zhulin I.B."/>
            <person name="Tiedje J.M."/>
        </authorList>
    </citation>
    <scope>NUCLEOTIDE SEQUENCE [LARGE SCALE GENOMIC DNA]</scope>
    <source>
        <strain>LB400</strain>
    </source>
</reference>
<reference key="3">
    <citation type="journal article" date="2009" name="Biochemistry">
        <title>Characterization of an aldolase-dehydrogenase complex that exhibits substrate channeling in the polychlorinated biphenyls degradation pathway.</title>
        <authorList>
            <person name="Baker P."/>
            <person name="Pan D."/>
            <person name="Carere J."/>
            <person name="Rossi A."/>
            <person name="Wang W."/>
            <person name="Seah S.Y.K."/>
        </authorList>
    </citation>
    <scope>FUNCTION</scope>
    <scope>CATALYTIC ACTIVITY</scope>
    <scope>SUBSTRATE SPECIFICITY</scope>
    <scope>BIOPHYSICOCHEMICAL PROPERTIES</scope>
    <scope>SUBUNIT</scope>
    <scope>COMPLEX WITH BPHI</scope>
</reference>
<reference key="4">
    <citation type="journal article" date="2010" name="Biochemistry">
        <title>Comparison of two metal-dependent pyruvate aldolases related by convergent evolution: substrate specificity, kinetic mechanism, and substrate channeling.</title>
        <authorList>
            <person name="Wang W."/>
            <person name="Baker P."/>
            <person name="Seah S.Y."/>
        </authorList>
    </citation>
    <scope>FUNCTION</scope>
    <scope>ACTIVITY REGULATION</scope>
</reference>
<reference key="5">
    <citation type="journal article" date="2011" name="Biochemistry">
        <title>Investigating the molecular determinants for substrate channeling in BphI-BphJ, an aldolase-dehydrogenase complex from the polychlorinated biphenyls degradation pathway.</title>
        <authorList>
            <person name="Carere J."/>
            <person name="Baker P."/>
            <person name="Seah S.Y."/>
        </authorList>
    </citation>
    <scope>MUTAGENESIS OF ILE-195</scope>
    <scope>ALDEHYDE CHANNELING MECHANISM</scope>
    <source>
        <strain>LB400</strain>
    </source>
</reference>
<reference key="6">
    <citation type="journal article" date="2012" name="Biochemistry">
        <title>Substrate specificity, substrate channeling, and allostery in BphJ: an acylating aldehyde dehydrogenase associated with the pyruvate aldolase BphI.</title>
        <authorList>
            <person name="Baker P."/>
            <person name="Carere J."/>
            <person name="Seah S.Y."/>
        </authorList>
    </citation>
    <scope>CATALYTIC ACTIVITY</scope>
    <scope>SUBSTRATE SPECIFICITY</scope>
    <scope>ACTIVE SITE</scope>
    <scope>REACTION MECHANISM</scope>
    <scope>MUTAGENESIS OF CYS-131; ASN-170; ILE-171; ILE-195 AND ASP-208</scope>
    <source>
        <strain>LB400</strain>
    </source>
</reference>
<gene>
    <name type="primary">bphJ</name>
    <name type="ordered locus">Bxeno_C1122</name>
    <name type="ORF">Bxe_C1188</name>
</gene>
<proteinExistence type="evidence at protein level"/>
<evidence type="ECO:0000255" key="1">
    <source>
        <dbReference type="HAMAP-Rule" id="MF_01657"/>
    </source>
</evidence>
<evidence type="ECO:0000269" key="2">
    <source>
    </source>
</evidence>
<evidence type="ECO:0000269" key="3">
    <source>
    </source>
</evidence>
<evidence type="ECO:0000269" key="4">
    <source>
    </source>
</evidence>
<evidence type="ECO:0000269" key="5">
    <source>
    </source>
</evidence>
<evidence type="ECO:0000305" key="6"/>
<accession>Q79AF6</accession>
<accession>Q13FT9</accession>
<comment type="function">
    <text evidence="2 3">Catalyzes the conversion of acetaldehyde or propanal to acetyl-CoA or propanoyl-CoA, respectively, using NAD(+) and coenzyme A. Displays broad specificity since it can utilize aliphatic aldehydes from two to five carbons in length as substrates; the aldehyde substrates can be directly channeled from the aldolase BphI to the dehydrogenase BphJ. Is the final enzyme in the meta-cleavage pathway for the degradation of polychlorinated biphenyls (PCBs). Is also able to utilize NADP(+) instead of NAD(+). Is not active with succinic semialdehyde or picolinaldehyde as substrates. Can also catalyze the reverse reaction, i.e. the reductive deacylation of acetyl-CoA to acetaldehyde, which is then channeled to the BphI active site. The BphI-BphJ enzyme complex exhibits unique bidirectionality in substrate channeling and allosteric activation.</text>
</comment>
<comment type="catalytic activity">
    <reaction>
        <text>acetaldehyde + NAD(+) + CoA = acetyl-CoA + NADH + H(+)</text>
        <dbReference type="Rhea" id="RHEA:23288"/>
        <dbReference type="ChEBI" id="CHEBI:15343"/>
        <dbReference type="ChEBI" id="CHEBI:15378"/>
        <dbReference type="ChEBI" id="CHEBI:57287"/>
        <dbReference type="ChEBI" id="CHEBI:57288"/>
        <dbReference type="ChEBI" id="CHEBI:57540"/>
        <dbReference type="ChEBI" id="CHEBI:57945"/>
        <dbReference type="EC" id="1.2.1.10"/>
    </reaction>
</comment>
<comment type="catalytic activity">
    <reaction>
        <text>propanal + NAD(+) + CoA = propanoyl-CoA + NADH + H(+)</text>
        <dbReference type="Rhea" id="RHEA:36027"/>
        <dbReference type="ChEBI" id="CHEBI:15378"/>
        <dbReference type="ChEBI" id="CHEBI:17153"/>
        <dbReference type="ChEBI" id="CHEBI:57287"/>
        <dbReference type="ChEBI" id="CHEBI:57392"/>
        <dbReference type="ChEBI" id="CHEBI:57540"/>
        <dbReference type="ChEBI" id="CHEBI:57945"/>
        <dbReference type="EC" id="1.2.1.87"/>
    </reaction>
</comment>
<comment type="activity regulation">
    <text evidence="3">Bound pyruvate or other intermediates in the aldol addition reaction catalyzed by BphI allosterically activates BphJ reductive deacylation activity.</text>
</comment>
<comment type="biophysicochemical properties">
    <kinetics>
        <KM evidence="2">23.6 mM for acetaldehyde (at pH 8 and 25 degrees Celsius)</KM>
        <KM evidence="2">23.1 mM for propanaldehyde (at pH 8 and 25 degrees Celsius)</KM>
        <KM evidence="2">31.7 mM for butyraldehyde (at pH 8 and 25 degrees Celsius)</KM>
        <KM evidence="2">7.7 mM for isobutyraldehyde (at pH 8 and 25 degrees Celsius)</KM>
        <KM evidence="2">34.8 uM for NAD(+) (at pH 8 and 25 degrees Celsius)</KM>
        <KM evidence="2">561 uM for NADP(+) (at pH 8 and 25 degrees Celsius)</KM>
        <text>kcat is 17.2 and 16.3 sec(-1) with acetaldehyde and propanaldehyde as substrate, respectively (at pH 8 and 25 degrees Celsius).</text>
    </kinetics>
</comment>
<comment type="pathway">
    <text>Xenobiotic degradation; polychlorinated biphenyl degradation.</text>
</comment>
<comment type="subunit">
    <text evidence="2">Heterotetramer composed of two BphI (aldolase) and two BphJ (dehydrogenase).</text>
</comment>
<comment type="similarity">
    <text evidence="6">Belongs to the acetaldehyde dehydrogenase family.</text>
</comment>
<protein>
    <recommendedName>
        <fullName>Acetaldehyde dehydrogenase 4</fullName>
        <ecNumber>1.2.1.10</ecNumber>
    </recommendedName>
    <alternativeName>
        <fullName>Acetaldehyde dehydrogenase [acetylating] 4</fullName>
    </alternativeName>
    <alternativeName>
        <fullName>Propanal dehydrogenase (CoA-propanoylating)</fullName>
        <ecNumber>1.2.1.87</ecNumber>
    </alternativeName>
</protein>
<dbReference type="EC" id="1.2.1.10"/>
<dbReference type="EC" id="1.2.1.87"/>
<dbReference type="EMBL" id="CP000272">
    <property type="protein sequence ID" value="ABE37050.1"/>
    <property type="molecule type" value="Genomic_DNA"/>
</dbReference>
<dbReference type="EMBL" id="X76500">
    <property type="protein sequence ID" value="CAA54035.1"/>
    <property type="molecule type" value="Genomic_DNA"/>
</dbReference>
<dbReference type="RefSeq" id="WP_003450975.1">
    <property type="nucleotide sequence ID" value="NZ_CP008761.1"/>
</dbReference>
<dbReference type="SMR" id="Q79AF6"/>
<dbReference type="STRING" id="266265.Bxe_C1188"/>
<dbReference type="KEGG" id="bxb:DR64_8617"/>
<dbReference type="KEGG" id="bxe:Bxe_C1188"/>
<dbReference type="eggNOG" id="COG4569">
    <property type="taxonomic scope" value="Bacteria"/>
</dbReference>
<dbReference type="OrthoDB" id="9786743at2"/>
<dbReference type="BRENDA" id="1.2.1.10">
    <property type="organism ID" value="7691"/>
</dbReference>
<dbReference type="BRENDA" id="1.2.1.87">
    <property type="organism ID" value="7691"/>
</dbReference>
<dbReference type="SABIO-RK" id="Q79AF6"/>
<dbReference type="UniPathway" id="UPA01002"/>
<dbReference type="Proteomes" id="UP000001817">
    <property type="component" value="Chromosome 3"/>
</dbReference>
<dbReference type="GO" id="GO:0008774">
    <property type="term" value="F:acetaldehyde dehydrogenase (acetylating) activity"/>
    <property type="evidence" value="ECO:0007669"/>
    <property type="project" value="UniProtKB-UniRule"/>
</dbReference>
<dbReference type="GO" id="GO:0051287">
    <property type="term" value="F:NAD binding"/>
    <property type="evidence" value="ECO:0007669"/>
    <property type="project" value="UniProtKB-UniRule"/>
</dbReference>
<dbReference type="GO" id="GO:0009056">
    <property type="term" value="P:catabolic process"/>
    <property type="evidence" value="ECO:0007669"/>
    <property type="project" value="UniProtKB-KW"/>
</dbReference>
<dbReference type="CDD" id="cd23933">
    <property type="entry name" value="ALDH_C"/>
    <property type="match status" value="1"/>
</dbReference>
<dbReference type="Gene3D" id="3.30.360.10">
    <property type="entry name" value="Dihydrodipicolinate Reductase, domain 2"/>
    <property type="match status" value="1"/>
</dbReference>
<dbReference type="Gene3D" id="3.40.50.720">
    <property type="entry name" value="NAD(P)-binding Rossmann-like Domain"/>
    <property type="match status" value="1"/>
</dbReference>
<dbReference type="HAMAP" id="MF_01657">
    <property type="entry name" value="Ac_ald_DH_ac"/>
    <property type="match status" value="1"/>
</dbReference>
<dbReference type="InterPro" id="IPR003361">
    <property type="entry name" value="Acetaldehyde_dehydrogenase"/>
</dbReference>
<dbReference type="InterPro" id="IPR015426">
    <property type="entry name" value="Acetylaldehyde_DH_C"/>
</dbReference>
<dbReference type="InterPro" id="IPR036291">
    <property type="entry name" value="NAD(P)-bd_dom_sf"/>
</dbReference>
<dbReference type="InterPro" id="IPR000534">
    <property type="entry name" value="Semialdehyde_DH_NAD-bd"/>
</dbReference>
<dbReference type="NCBIfam" id="TIGR03215">
    <property type="entry name" value="ac_ald_DH_ac"/>
    <property type="match status" value="1"/>
</dbReference>
<dbReference type="NCBIfam" id="NF006157">
    <property type="entry name" value="PRK08300.1"/>
    <property type="match status" value="1"/>
</dbReference>
<dbReference type="Pfam" id="PF09290">
    <property type="entry name" value="AcetDehyd-dimer"/>
    <property type="match status" value="1"/>
</dbReference>
<dbReference type="PIRSF" id="PIRSF015689">
    <property type="entry name" value="Actaldh_dh_actl"/>
    <property type="match status" value="1"/>
</dbReference>
<dbReference type="SMART" id="SM00859">
    <property type="entry name" value="Semialdhyde_dh"/>
    <property type="match status" value="1"/>
</dbReference>
<dbReference type="SUPFAM" id="SSF55347">
    <property type="entry name" value="Glyceraldehyde-3-phosphate dehydrogenase-like, C-terminal domain"/>
    <property type="match status" value="1"/>
</dbReference>
<dbReference type="SUPFAM" id="SSF51735">
    <property type="entry name" value="NAD(P)-binding Rossmann-fold domains"/>
    <property type="match status" value="1"/>
</dbReference>
<name>ACDH4_PARXL</name>
<organism>
    <name type="scientific">Paraburkholderia xenovorans (strain LB400)</name>
    <dbReference type="NCBI Taxonomy" id="266265"/>
    <lineage>
        <taxon>Bacteria</taxon>
        <taxon>Pseudomonadati</taxon>
        <taxon>Pseudomonadota</taxon>
        <taxon>Betaproteobacteria</taxon>
        <taxon>Burkholderiales</taxon>
        <taxon>Burkholderiaceae</taxon>
        <taxon>Paraburkholderia</taxon>
    </lineage>
</organism>